<keyword id="KW-0963">Cytoplasm</keyword>
<keyword id="KW-0378">Hydrolase</keyword>
<keyword id="KW-0645">Protease</keyword>
<keyword id="KW-0720">Serine protease</keyword>
<protein>
    <recommendedName>
        <fullName evidence="1">ATP-dependent Clp protease proteolytic subunit</fullName>
        <ecNumber evidence="1">3.4.21.92</ecNumber>
    </recommendedName>
    <alternativeName>
        <fullName evidence="1">Endopeptidase Clp</fullName>
    </alternativeName>
</protein>
<reference key="1">
    <citation type="journal article" date="2009" name="Genome Biol.">
        <title>Genomic and genetic analyses of diversity and plant interactions of Pseudomonas fluorescens.</title>
        <authorList>
            <person name="Silby M.W."/>
            <person name="Cerdeno-Tarraga A.M."/>
            <person name="Vernikos G.S."/>
            <person name="Giddens S.R."/>
            <person name="Jackson R.W."/>
            <person name="Preston G.M."/>
            <person name="Zhang X.-X."/>
            <person name="Moon C.D."/>
            <person name="Gehrig S.M."/>
            <person name="Godfrey S.A.C."/>
            <person name="Knight C.G."/>
            <person name="Malone J.G."/>
            <person name="Robinson Z."/>
            <person name="Spiers A.J."/>
            <person name="Harris S."/>
            <person name="Challis G.L."/>
            <person name="Yaxley A.M."/>
            <person name="Harris D."/>
            <person name="Seeger K."/>
            <person name="Murphy L."/>
            <person name="Rutter S."/>
            <person name="Squares R."/>
            <person name="Quail M.A."/>
            <person name="Saunders E."/>
            <person name="Mavromatis K."/>
            <person name="Brettin T.S."/>
            <person name="Bentley S.D."/>
            <person name="Hothersall J."/>
            <person name="Stephens E."/>
            <person name="Thomas C.M."/>
            <person name="Parkhill J."/>
            <person name="Levy S.B."/>
            <person name="Rainey P.B."/>
            <person name="Thomson N.R."/>
        </authorList>
    </citation>
    <scope>NUCLEOTIDE SEQUENCE [LARGE SCALE GENOMIC DNA]</scope>
    <source>
        <strain>Pf0-1</strain>
    </source>
</reference>
<organism>
    <name type="scientific">Pseudomonas fluorescens (strain Pf0-1)</name>
    <dbReference type="NCBI Taxonomy" id="205922"/>
    <lineage>
        <taxon>Bacteria</taxon>
        <taxon>Pseudomonadati</taxon>
        <taxon>Pseudomonadota</taxon>
        <taxon>Gammaproteobacteria</taxon>
        <taxon>Pseudomonadales</taxon>
        <taxon>Pseudomonadaceae</taxon>
        <taxon>Pseudomonas</taxon>
    </lineage>
</organism>
<dbReference type="EC" id="3.4.21.92" evidence="1"/>
<dbReference type="EMBL" id="CP000094">
    <property type="protein sequence ID" value="ABA75435.1"/>
    <property type="molecule type" value="Genomic_DNA"/>
</dbReference>
<dbReference type="RefSeq" id="WP_007951559.1">
    <property type="nucleotide sequence ID" value="NC_007492.2"/>
</dbReference>
<dbReference type="SMR" id="Q3K9W9"/>
<dbReference type="MEROPS" id="S14.001"/>
<dbReference type="GeneID" id="93488672"/>
<dbReference type="KEGG" id="pfo:Pfl01_3697"/>
<dbReference type="eggNOG" id="COG0740">
    <property type="taxonomic scope" value="Bacteria"/>
</dbReference>
<dbReference type="HOGENOM" id="CLU_058707_3_3_6"/>
<dbReference type="Proteomes" id="UP000002704">
    <property type="component" value="Chromosome"/>
</dbReference>
<dbReference type="GO" id="GO:0005737">
    <property type="term" value="C:cytoplasm"/>
    <property type="evidence" value="ECO:0007669"/>
    <property type="project" value="UniProtKB-SubCell"/>
</dbReference>
<dbReference type="GO" id="GO:0009368">
    <property type="term" value="C:endopeptidase Clp complex"/>
    <property type="evidence" value="ECO:0007669"/>
    <property type="project" value="TreeGrafter"/>
</dbReference>
<dbReference type="GO" id="GO:0004176">
    <property type="term" value="F:ATP-dependent peptidase activity"/>
    <property type="evidence" value="ECO:0007669"/>
    <property type="project" value="InterPro"/>
</dbReference>
<dbReference type="GO" id="GO:0051117">
    <property type="term" value="F:ATPase binding"/>
    <property type="evidence" value="ECO:0007669"/>
    <property type="project" value="TreeGrafter"/>
</dbReference>
<dbReference type="GO" id="GO:0004252">
    <property type="term" value="F:serine-type endopeptidase activity"/>
    <property type="evidence" value="ECO:0007669"/>
    <property type="project" value="UniProtKB-UniRule"/>
</dbReference>
<dbReference type="GO" id="GO:0006515">
    <property type="term" value="P:protein quality control for misfolded or incompletely synthesized proteins"/>
    <property type="evidence" value="ECO:0007669"/>
    <property type="project" value="TreeGrafter"/>
</dbReference>
<dbReference type="CDD" id="cd07017">
    <property type="entry name" value="S14_ClpP_2"/>
    <property type="match status" value="1"/>
</dbReference>
<dbReference type="FunFam" id="3.90.226.10:FF:000001">
    <property type="entry name" value="ATP-dependent Clp protease proteolytic subunit"/>
    <property type="match status" value="1"/>
</dbReference>
<dbReference type="Gene3D" id="3.90.226.10">
    <property type="entry name" value="2-enoyl-CoA Hydratase, Chain A, domain 1"/>
    <property type="match status" value="1"/>
</dbReference>
<dbReference type="HAMAP" id="MF_00444">
    <property type="entry name" value="ClpP"/>
    <property type="match status" value="1"/>
</dbReference>
<dbReference type="InterPro" id="IPR001907">
    <property type="entry name" value="ClpP"/>
</dbReference>
<dbReference type="InterPro" id="IPR029045">
    <property type="entry name" value="ClpP/crotonase-like_dom_sf"/>
</dbReference>
<dbReference type="InterPro" id="IPR023562">
    <property type="entry name" value="ClpP/TepA"/>
</dbReference>
<dbReference type="InterPro" id="IPR033135">
    <property type="entry name" value="ClpP_His_AS"/>
</dbReference>
<dbReference type="InterPro" id="IPR018215">
    <property type="entry name" value="ClpP_Ser_AS"/>
</dbReference>
<dbReference type="NCBIfam" id="TIGR00493">
    <property type="entry name" value="clpP"/>
    <property type="match status" value="1"/>
</dbReference>
<dbReference type="NCBIfam" id="NF001368">
    <property type="entry name" value="PRK00277.1"/>
    <property type="match status" value="1"/>
</dbReference>
<dbReference type="NCBIfam" id="NF009205">
    <property type="entry name" value="PRK12553.1"/>
    <property type="match status" value="1"/>
</dbReference>
<dbReference type="PANTHER" id="PTHR10381">
    <property type="entry name" value="ATP-DEPENDENT CLP PROTEASE PROTEOLYTIC SUBUNIT"/>
    <property type="match status" value="1"/>
</dbReference>
<dbReference type="PANTHER" id="PTHR10381:SF70">
    <property type="entry name" value="ATP-DEPENDENT CLP PROTEASE PROTEOLYTIC SUBUNIT"/>
    <property type="match status" value="1"/>
</dbReference>
<dbReference type="Pfam" id="PF00574">
    <property type="entry name" value="CLP_protease"/>
    <property type="match status" value="1"/>
</dbReference>
<dbReference type="PRINTS" id="PR00127">
    <property type="entry name" value="CLPPROTEASEP"/>
</dbReference>
<dbReference type="SUPFAM" id="SSF52096">
    <property type="entry name" value="ClpP/crotonase"/>
    <property type="match status" value="1"/>
</dbReference>
<dbReference type="PROSITE" id="PS00382">
    <property type="entry name" value="CLP_PROTEASE_HIS"/>
    <property type="match status" value="1"/>
</dbReference>
<dbReference type="PROSITE" id="PS00381">
    <property type="entry name" value="CLP_PROTEASE_SER"/>
    <property type="match status" value="1"/>
</dbReference>
<gene>
    <name evidence="1" type="primary">clpP</name>
    <name type="ordered locus">Pfl01_3697</name>
</gene>
<name>CLPP_PSEPF</name>
<proteinExistence type="inferred from homology"/>
<comment type="function">
    <text evidence="1">Cleaves peptides in various proteins in a process that requires ATP hydrolysis. Has a chymotrypsin-like activity. Plays a major role in the degradation of misfolded proteins.</text>
</comment>
<comment type="catalytic activity">
    <reaction evidence="1">
        <text>Hydrolysis of proteins to small peptides in the presence of ATP and magnesium. alpha-casein is the usual test substrate. In the absence of ATP, only oligopeptides shorter than five residues are hydrolyzed (such as succinyl-Leu-Tyr-|-NHMec, and Leu-Tyr-Leu-|-Tyr-Trp, in which cleavage of the -Tyr-|-Leu- and -Tyr-|-Trp bonds also occurs).</text>
        <dbReference type="EC" id="3.4.21.92"/>
    </reaction>
</comment>
<comment type="subunit">
    <text evidence="1">Fourteen ClpP subunits assemble into 2 heptameric rings which stack back to back to give a disk-like structure with a central cavity, resembling the structure of eukaryotic proteasomes.</text>
</comment>
<comment type="subcellular location">
    <subcellularLocation>
        <location evidence="1">Cytoplasm</location>
    </subcellularLocation>
</comment>
<comment type="similarity">
    <text evidence="1">Belongs to the peptidase S14 family.</text>
</comment>
<feature type="chain" id="PRO_0000226460" description="ATP-dependent Clp protease proteolytic subunit">
    <location>
        <begin position="1"/>
        <end position="211"/>
    </location>
</feature>
<feature type="active site" description="Nucleophile" evidence="1">
    <location>
        <position position="114"/>
    </location>
</feature>
<feature type="active site" evidence="1">
    <location>
        <position position="139"/>
    </location>
</feature>
<sequence length="211" mass="23450">MFRNSYIQQNSDIQAAGGLVPMVVEQSARGERAYDIYSRLLKERVIFLVGPVEDYMANLICAQLLFLEAENPDKDIHLYINSPGGSVTAGMSIYDTMQFIKPNVSTTCIGQACSMGAFLLTAGAPGKRFCLPNSRVMIHQPLGGFQGQASDIEIHAKEILFIRERLNTLMAKHSGRTLEEIERDTNRDNFMSAEAAKEYGLIDEVINQRPA</sequence>
<accession>Q3K9W9</accession>
<evidence type="ECO:0000255" key="1">
    <source>
        <dbReference type="HAMAP-Rule" id="MF_00444"/>
    </source>
</evidence>